<gene>
    <name type="primary">Spata6l</name>
</gene>
<evidence type="ECO:0000256" key="1">
    <source>
        <dbReference type="SAM" id="MobiDB-lite"/>
    </source>
</evidence>
<evidence type="ECO:0000305" key="2"/>
<evidence type="ECO:0007744" key="3">
    <source>
    </source>
</evidence>
<organism>
    <name type="scientific">Rattus norvegicus</name>
    <name type="common">Rat</name>
    <dbReference type="NCBI Taxonomy" id="10116"/>
    <lineage>
        <taxon>Eukaryota</taxon>
        <taxon>Metazoa</taxon>
        <taxon>Chordata</taxon>
        <taxon>Craniata</taxon>
        <taxon>Vertebrata</taxon>
        <taxon>Euteleostomi</taxon>
        <taxon>Mammalia</taxon>
        <taxon>Eutheria</taxon>
        <taxon>Euarchontoglires</taxon>
        <taxon>Glires</taxon>
        <taxon>Rodentia</taxon>
        <taxon>Myomorpha</taxon>
        <taxon>Muroidea</taxon>
        <taxon>Muridae</taxon>
        <taxon>Murinae</taxon>
        <taxon>Rattus</taxon>
    </lineage>
</organism>
<accession>Q6AYJ3</accession>
<protein>
    <recommendedName>
        <fullName>Spermatogenesis associated 6-like protein</fullName>
    </recommendedName>
</protein>
<name>SPA6L_RAT</name>
<dbReference type="EMBL" id="BC079024">
    <property type="protein sequence ID" value="AAH79024.1"/>
    <property type="molecule type" value="mRNA"/>
</dbReference>
<dbReference type="RefSeq" id="NP_001014187.1">
    <property type="nucleotide sequence ID" value="NM_001014165.1"/>
</dbReference>
<dbReference type="RefSeq" id="XP_008758564.2">
    <property type="nucleotide sequence ID" value="XM_008760342.4"/>
</dbReference>
<dbReference type="FunCoup" id="Q6AYJ3">
    <property type="interactions" value="162"/>
</dbReference>
<dbReference type="STRING" id="10116.ENSRNOP00000020464"/>
<dbReference type="iPTMnet" id="Q6AYJ3"/>
<dbReference type="PhosphoSitePlus" id="Q6AYJ3"/>
<dbReference type="PaxDb" id="10116-ENSRNOP00000020464"/>
<dbReference type="GeneID" id="361747"/>
<dbReference type="KEGG" id="rno:361747"/>
<dbReference type="UCSC" id="RGD:1310039">
    <property type="organism name" value="rat"/>
</dbReference>
<dbReference type="AGR" id="RGD:1310039"/>
<dbReference type="CTD" id="55064"/>
<dbReference type="RGD" id="1310039">
    <property type="gene designation" value="Spata6l"/>
</dbReference>
<dbReference type="VEuPathDB" id="HostDB:ENSRNOG00000015137"/>
<dbReference type="eggNOG" id="ENOG502RYM7">
    <property type="taxonomic scope" value="Eukaryota"/>
</dbReference>
<dbReference type="HOGENOM" id="CLU_038272_1_0_1"/>
<dbReference type="InParanoid" id="Q6AYJ3"/>
<dbReference type="PhylomeDB" id="Q6AYJ3"/>
<dbReference type="TreeFam" id="TF328520"/>
<dbReference type="PRO" id="PR:Q6AYJ3"/>
<dbReference type="Proteomes" id="UP000002494">
    <property type="component" value="Chromosome 1"/>
</dbReference>
<dbReference type="Bgee" id="ENSRNOG00000015137">
    <property type="expression patterns" value="Expressed in testis and 17 other cell types or tissues"/>
</dbReference>
<dbReference type="GO" id="GO:0120212">
    <property type="term" value="C:sperm head-tail coupling apparatus"/>
    <property type="evidence" value="ECO:0007669"/>
    <property type="project" value="InterPro"/>
</dbReference>
<dbReference type="GO" id="GO:0032027">
    <property type="term" value="F:myosin light chain binding"/>
    <property type="evidence" value="ECO:0007669"/>
    <property type="project" value="InterPro"/>
</dbReference>
<dbReference type="GO" id="GO:0007283">
    <property type="term" value="P:spermatogenesis"/>
    <property type="evidence" value="ECO:0007669"/>
    <property type="project" value="InterPro"/>
</dbReference>
<dbReference type="InterPro" id="IPR042769">
    <property type="entry name" value="SPATA6_fam"/>
</dbReference>
<dbReference type="InterPro" id="IPR032732">
    <property type="entry name" value="SPATA6_N"/>
</dbReference>
<dbReference type="PANTHER" id="PTHR16435:SF5">
    <property type="entry name" value="SPERMATOGENESIS ASSOCIATED 6-LIKE PROTEIN"/>
    <property type="match status" value="1"/>
</dbReference>
<dbReference type="PANTHER" id="PTHR16435">
    <property type="entry name" value="SPERMATOGENESIS-ASSOCIATED PROTEIN 6 SPATA6"/>
    <property type="match status" value="1"/>
</dbReference>
<dbReference type="Pfam" id="PF14909">
    <property type="entry name" value="SPATA6"/>
    <property type="match status" value="1"/>
</dbReference>
<keyword id="KW-0597">Phosphoprotein</keyword>
<keyword id="KW-1185">Reference proteome</keyword>
<proteinExistence type="evidence at protein level"/>
<sequence>MPLEVVVELQIRAISCPGVFLPDKEVVYLGVYLLNQYLETDCFPSVFPIVIQQSMRFEKVFEEAMDPGAVAELLESFLTRFELVQLVSPAWEELAYYEKNTRDFLFPEPKLTSSHLGMQREVLMKTAIWFPGIAPKLEFSTRTAILECVFPCKNRFLWEERCKLQQSFSKLNGPANNRKKKPKEKNSDQLSKGTPFWGPSPQRLHLHRPTQRNPGKSFRFLGERKPPFVVRHVDSGNPFGENNLEHHSQKSRRKPKFINFDLAKKRAFSLDSLEANIKVVREPDERIVLRSQSPPPLNSGHFRKPLLNHQGDVDFHPETTVTTSQLSSPPSPLDHSLLQERFQPCSASMWQKIQERACSLLTPNRAHPKEDSISETNSIHERPSYLLRKHLLREHRYF</sequence>
<feature type="chain" id="PRO_0000089705" description="Spermatogenesis associated 6-like protein">
    <location>
        <begin position="1"/>
        <end position="398"/>
    </location>
</feature>
<feature type="region of interest" description="Disordered" evidence="1">
    <location>
        <begin position="170"/>
        <end position="215"/>
    </location>
</feature>
<feature type="modified residue" description="Phosphoserine" evidence="3">
    <location>
        <position position="269"/>
    </location>
</feature>
<feature type="modified residue" description="Phosphoserine" evidence="3">
    <location>
        <position position="272"/>
    </location>
</feature>
<comment type="similarity">
    <text evidence="2">Belongs to the SPATA6 family.</text>
</comment>
<reference key="1">
    <citation type="journal article" date="2004" name="Genome Res.">
        <title>The status, quality, and expansion of the NIH full-length cDNA project: the Mammalian Gene Collection (MGC).</title>
        <authorList>
            <consortium name="The MGC Project Team"/>
        </authorList>
    </citation>
    <scope>NUCLEOTIDE SEQUENCE [LARGE SCALE MRNA]</scope>
    <source>
        <tissue>Testis</tissue>
    </source>
</reference>
<reference key="2">
    <citation type="journal article" date="2012" name="Nat. Commun.">
        <title>Quantitative maps of protein phosphorylation sites across 14 different rat organs and tissues.</title>
        <authorList>
            <person name="Lundby A."/>
            <person name="Secher A."/>
            <person name="Lage K."/>
            <person name="Nordsborg N.B."/>
            <person name="Dmytriyev A."/>
            <person name="Lundby C."/>
            <person name="Olsen J.V."/>
        </authorList>
    </citation>
    <scope>PHOSPHORYLATION [LARGE SCALE ANALYSIS] AT SER-269 AND SER-272</scope>
    <scope>IDENTIFICATION BY MASS SPECTROMETRY [LARGE SCALE ANALYSIS]</scope>
</reference>